<reference key="1">
    <citation type="journal article" date="2007" name="J. Bacteriol.">
        <title>Complete genome of acute rheumatic fever-associated serotype M5 Streptococcus pyogenes strain Manfredo.</title>
        <authorList>
            <person name="Holden M.T.G."/>
            <person name="Scott A."/>
            <person name="Cherevach I."/>
            <person name="Chillingworth T."/>
            <person name="Churcher C."/>
            <person name="Cronin A."/>
            <person name="Dowd L."/>
            <person name="Feltwell T."/>
            <person name="Hamlin N."/>
            <person name="Holroyd S."/>
            <person name="Jagels K."/>
            <person name="Moule S."/>
            <person name="Mungall K."/>
            <person name="Quail M.A."/>
            <person name="Price C."/>
            <person name="Rabbinowitsch E."/>
            <person name="Sharp S."/>
            <person name="Skelton J."/>
            <person name="Whitehead S."/>
            <person name="Barrell B.G."/>
            <person name="Kehoe M."/>
            <person name="Parkhill J."/>
        </authorList>
    </citation>
    <scope>NUCLEOTIDE SEQUENCE [LARGE SCALE GENOMIC DNA]</scope>
    <source>
        <strain>Manfredo</strain>
    </source>
</reference>
<feature type="chain" id="PRO_1000051446" description="Asparagine--tRNA ligase">
    <location>
        <begin position="1"/>
        <end position="448"/>
    </location>
</feature>
<gene>
    <name evidence="1" type="primary">asnS</name>
    <name type="ordered locus">SpyM51326</name>
</gene>
<sequence length="448" mass="51208">MSKKLISIVDVKDYVGQEVTIGAWVANKSGKGKIAFVQLRDGSAFFQGVAFKPNFIEKYGEESGLEKFDVIKRLNQETSVYVTGIVKEDERSKFGYELDITDLEIIGESHEYPITPKEHGTDFLMDNRHLWLRSRKQMAVMQIRNAIIYATYEFFDQNGFIKFDSPILSENAAEDSTELFETDYFGKPAFLSQSGQLYLEAGAMALGRVFDFGPVFRAEKSKTRRHLTEFWMMDAEYSFLSHEESLDLQEAYVKALIQGVLDRAPQALDILERDVEALKRYITEPFKRVSYDDAITLLQEHEADEDTDYEHLEHGDDFGSPHETWISNYFGVPTFVVNYPASFKAFYMKPVPGNPERVLCADLLAPEGYGEIIGGSMREDNYDALVAKMDELGMDKSEYDFYLDLRKYGSVPHGGFGIGIERMVTFVAGTKHIREAIPFPRMLHRIRP</sequence>
<evidence type="ECO:0000255" key="1">
    <source>
        <dbReference type="HAMAP-Rule" id="MF_00534"/>
    </source>
</evidence>
<accession>A2RFM5</accession>
<organism>
    <name type="scientific">Streptococcus pyogenes serotype M5 (strain Manfredo)</name>
    <dbReference type="NCBI Taxonomy" id="160491"/>
    <lineage>
        <taxon>Bacteria</taxon>
        <taxon>Bacillati</taxon>
        <taxon>Bacillota</taxon>
        <taxon>Bacilli</taxon>
        <taxon>Lactobacillales</taxon>
        <taxon>Streptococcaceae</taxon>
        <taxon>Streptococcus</taxon>
    </lineage>
</organism>
<name>SYN_STRPG</name>
<protein>
    <recommendedName>
        <fullName evidence="1">Asparagine--tRNA ligase</fullName>
        <ecNumber evidence="1">6.1.1.22</ecNumber>
    </recommendedName>
    <alternativeName>
        <fullName evidence="1">Asparaginyl-tRNA synthetase</fullName>
        <shortName evidence="1">AsnRS</shortName>
    </alternativeName>
</protein>
<comment type="catalytic activity">
    <reaction evidence="1">
        <text>tRNA(Asn) + L-asparagine + ATP = L-asparaginyl-tRNA(Asn) + AMP + diphosphate + H(+)</text>
        <dbReference type="Rhea" id="RHEA:11180"/>
        <dbReference type="Rhea" id="RHEA-COMP:9659"/>
        <dbReference type="Rhea" id="RHEA-COMP:9674"/>
        <dbReference type="ChEBI" id="CHEBI:15378"/>
        <dbReference type="ChEBI" id="CHEBI:30616"/>
        <dbReference type="ChEBI" id="CHEBI:33019"/>
        <dbReference type="ChEBI" id="CHEBI:58048"/>
        <dbReference type="ChEBI" id="CHEBI:78442"/>
        <dbReference type="ChEBI" id="CHEBI:78515"/>
        <dbReference type="ChEBI" id="CHEBI:456215"/>
        <dbReference type="EC" id="6.1.1.22"/>
    </reaction>
</comment>
<comment type="subunit">
    <text evidence="1">Homodimer.</text>
</comment>
<comment type="subcellular location">
    <subcellularLocation>
        <location evidence="1">Cytoplasm</location>
    </subcellularLocation>
</comment>
<comment type="similarity">
    <text evidence="1">Belongs to the class-II aminoacyl-tRNA synthetase family.</text>
</comment>
<proteinExistence type="inferred from homology"/>
<dbReference type="EC" id="6.1.1.22" evidence="1"/>
<dbReference type="EMBL" id="AM295007">
    <property type="protein sequence ID" value="CAM30654.1"/>
    <property type="molecule type" value="Genomic_DNA"/>
</dbReference>
<dbReference type="RefSeq" id="WP_002985437.1">
    <property type="nucleotide sequence ID" value="NC_009332.1"/>
</dbReference>
<dbReference type="SMR" id="A2RFM5"/>
<dbReference type="GeneID" id="69901153"/>
<dbReference type="KEGG" id="spf:SpyM51326"/>
<dbReference type="HOGENOM" id="CLU_004553_2_0_9"/>
<dbReference type="GO" id="GO:0005737">
    <property type="term" value="C:cytoplasm"/>
    <property type="evidence" value="ECO:0007669"/>
    <property type="project" value="UniProtKB-SubCell"/>
</dbReference>
<dbReference type="GO" id="GO:0004816">
    <property type="term" value="F:asparagine-tRNA ligase activity"/>
    <property type="evidence" value="ECO:0007669"/>
    <property type="project" value="UniProtKB-UniRule"/>
</dbReference>
<dbReference type="GO" id="GO:0005524">
    <property type="term" value="F:ATP binding"/>
    <property type="evidence" value="ECO:0007669"/>
    <property type="project" value="UniProtKB-UniRule"/>
</dbReference>
<dbReference type="GO" id="GO:0140096">
    <property type="term" value="F:catalytic activity, acting on a protein"/>
    <property type="evidence" value="ECO:0007669"/>
    <property type="project" value="UniProtKB-ARBA"/>
</dbReference>
<dbReference type="GO" id="GO:0003676">
    <property type="term" value="F:nucleic acid binding"/>
    <property type="evidence" value="ECO:0007669"/>
    <property type="project" value="InterPro"/>
</dbReference>
<dbReference type="GO" id="GO:0016740">
    <property type="term" value="F:transferase activity"/>
    <property type="evidence" value="ECO:0007669"/>
    <property type="project" value="UniProtKB-ARBA"/>
</dbReference>
<dbReference type="GO" id="GO:0006421">
    <property type="term" value="P:asparaginyl-tRNA aminoacylation"/>
    <property type="evidence" value="ECO:0007669"/>
    <property type="project" value="UniProtKB-UniRule"/>
</dbReference>
<dbReference type="CDD" id="cd04323">
    <property type="entry name" value="AsnRS_cyto_like_N"/>
    <property type="match status" value="1"/>
</dbReference>
<dbReference type="CDD" id="cd00776">
    <property type="entry name" value="AsxRS_core"/>
    <property type="match status" value="1"/>
</dbReference>
<dbReference type="Gene3D" id="3.30.930.10">
    <property type="entry name" value="Bira Bifunctional Protein, Domain 2"/>
    <property type="match status" value="1"/>
</dbReference>
<dbReference type="Gene3D" id="2.40.50.140">
    <property type="entry name" value="Nucleic acid-binding proteins"/>
    <property type="match status" value="1"/>
</dbReference>
<dbReference type="HAMAP" id="MF_00534">
    <property type="entry name" value="Asn_tRNA_synth"/>
    <property type="match status" value="1"/>
</dbReference>
<dbReference type="InterPro" id="IPR004364">
    <property type="entry name" value="Aa-tRNA-synt_II"/>
</dbReference>
<dbReference type="InterPro" id="IPR006195">
    <property type="entry name" value="aa-tRNA-synth_II"/>
</dbReference>
<dbReference type="InterPro" id="IPR045864">
    <property type="entry name" value="aa-tRNA-synth_II/BPL/LPL"/>
</dbReference>
<dbReference type="InterPro" id="IPR004522">
    <property type="entry name" value="Asn-tRNA-ligase"/>
</dbReference>
<dbReference type="InterPro" id="IPR002312">
    <property type="entry name" value="Asp/Asn-tRNA-synth_IIb"/>
</dbReference>
<dbReference type="InterPro" id="IPR012340">
    <property type="entry name" value="NA-bd_OB-fold"/>
</dbReference>
<dbReference type="InterPro" id="IPR004365">
    <property type="entry name" value="NA-bd_OB_tRNA"/>
</dbReference>
<dbReference type="NCBIfam" id="TIGR00457">
    <property type="entry name" value="asnS"/>
    <property type="match status" value="1"/>
</dbReference>
<dbReference type="NCBIfam" id="NF003037">
    <property type="entry name" value="PRK03932.1"/>
    <property type="match status" value="1"/>
</dbReference>
<dbReference type="PANTHER" id="PTHR22594:SF34">
    <property type="entry name" value="ASPARAGINE--TRNA LIGASE, MITOCHONDRIAL-RELATED"/>
    <property type="match status" value="1"/>
</dbReference>
<dbReference type="PANTHER" id="PTHR22594">
    <property type="entry name" value="ASPARTYL/LYSYL-TRNA SYNTHETASE"/>
    <property type="match status" value="1"/>
</dbReference>
<dbReference type="Pfam" id="PF00152">
    <property type="entry name" value="tRNA-synt_2"/>
    <property type="match status" value="1"/>
</dbReference>
<dbReference type="Pfam" id="PF01336">
    <property type="entry name" value="tRNA_anti-codon"/>
    <property type="match status" value="1"/>
</dbReference>
<dbReference type="PRINTS" id="PR01042">
    <property type="entry name" value="TRNASYNTHASP"/>
</dbReference>
<dbReference type="SUPFAM" id="SSF55681">
    <property type="entry name" value="Class II aaRS and biotin synthetases"/>
    <property type="match status" value="1"/>
</dbReference>
<dbReference type="SUPFAM" id="SSF50249">
    <property type="entry name" value="Nucleic acid-binding proteins"/>
    <property type="match status" value="1"/>
</dbReference>
<dbReference type="PROSITE" id="PS50862">
    <property type="entry name" value="AA_TRNA_LIGASE_II"/>
    <property type="match status" value="1"/>
</dbReference>
<keyword id="KW-0030">Aminoacyl-tRNA synthetase</keyword>
<keyword id="KW-0067">ATP-binding</keyword>
<keyword id="KW-0963">Cytoplasm</keyword>
<keyword id="KW-0436">Ligase</keyword>
<keyword id="KW-0547">Nucleotide-binding</keyword>
<keyword id="KW-0648">Protein biosynthesis</keyword>